<name>MPA5A_PHLPR</name>
<protein>
    <recommendedName>
        <fullName>Pollen allergen Phl p 5a</fullName>
    </recommendedName>
    <alternativeName>
        <fullName>Allergen Phl p Va</fullName>
    </alternativeName>
    <allergenName>Phl p 5a</allergenName>
</protein>
<comment type="subcellular location">
    <subcellularLocation>
        <location evidence="2">Secreted</location>
    </subcellularLocation>
</comment>
<comment type="allergen">
    <text>Causes an allergic reaction in human. Causes grass pollen allergy.</text>
</comment>
<comment type="similarity">
    <text evidence="2">Belongs to the Poa p IX/Phl p VI allergen family.</text>
</comment>
<keyword id="KW-0020">Allergen</keyword>
<keyword id="KW-0964">Secreted</keyword>
<feature type="chain" id="PRO_0000096551" description="Pollen allergen Phl p 5a">
    <location>
        <begin position="1" status="less than"/>
        <end position="286"/>
    </location>
</feature>
<feature type="region of interest" description="Disordered" evidence="1">
    <location>
        <begin position="1"/>
        <end position="35"/>
    </location>
</feature>
<feature type="compositionally biased region" description="Low complexity" evidence="1">
    <location>
        <begin position="1"/>
        <end position="34"/>
    </location>
</feature>
<feature type="non-terminal residue">
    <location>
        <position position="1"/>
    </location>
</feature>
<accession>Q40962</accession>
<dbReference type="EMBL" id="X70942">
    <property type="protein sequence ID" value="CAA50281.1"/>
    <property type="molecule type" value="mRNA"/>
</dbReference>
<dbReference type="BMRB" id="Q40962"/>
<dbReference type="SMR" id="Q40962"/>
<dbReference type="Allergome" id="558">
    <property type="allergen name" value="Phl p 5"/>
</dbReference>
<dbReference type="Allergome" id="560">
    <property type="allergen name" value="Phl p 5.0102"/>
</dbReference>
<dbReference type="ABCD" id="Q40962">
    <property type="antibodies" value="19 sequenced antibodies"/>
</dbReference>
<dbReference type="GO" id="GO:0005576">
    <property type="term" value="C:extracellular region"/>
    <property type="evidence" value="ECO:0007669"/>
    <property type="project" value="UniProtKB-SubCell"/>
</dbReference>
<dbReference type="CDD" id="cd12805">
    <property type="entry name" value="Allergen_V_VI"/>
    <property type="match status" value="1"/>
</dbReference>
<dbReference type="Gene3D" id="1.20.120.320">
    <property type="entry name" value="Group V grass pollen allergen"/>
    <property type="match status" value="2"/>
</dbReference>
<dbReference type="InterPro" id="IPR002914">
    <property type="entry name" value="Poa_pIX/Phl_pVI"/>
</dbReference>
<dbReference type="InterPro" id="IPR035506">
    <property type="entry name" value="Pollen_allergen/Os"/>
</dbReference>
<dbReference type="Pfam" id="PF01620">
    <property type="entry name" value="Pollen_allerg_2"/>
    <property type="match status" value="2"/>
</dbReference>
<dbReference type="PRINTS" id="PR00833">
    <property type="entry name" value="POAALLERGEN"/>
</dbReference>
<dbReference type="SUPFAM" id="SSF81736">
    <property type="entry name" value="Group V grass pollen allergen"/>
    <property type="match status" value="2"/>
</dbReference>
<sequence length="286" mass="28530">ADLGYGPATPAAPAAGYTPATPAAPAGADAAGKATTEEQKLIEKINAGFKAALAGAGVQPADKYRTFVATFGPASNKAFAEGLSGEPKGAAESSSKAALTSKLDAAYKLAYKTAEGATPEAKYDAYVATLSEALRIIAGTLEVHAVKPAAEEVKVIPAGELQVIEKVDAAFKVAATAANAAPANDKFTVFEAAFNDEIKASTGGAYESYKFIPALEAAVKQAYAATVATAPEVKYTVFETALKKAITAMSEAQKAAKPAAAATATATAAVGAATGAATAATGGYKV</sequence>
<organism>
    <name type="scientific">Phleum pratense</name>
    <name type="common">Common timothy</name>
    <dbReference type="NCBI Taxonomy" id="15957"/>
    <lineage>
        <taxon>Eukaryota</taxon>
        <taxon>Viridiplantae</taxon>
        <taxon>Streptophyta</taxon>
        <taxon>Embryophyta</taxon>
        <taxon>Tracheophyta</taxon>
        <taxon>Spermatophyta</taxon>
        <taxon>Magnoliopsida</taxon>
        <taxon>Liliopsida</taxon>
        <taxon>Poales</taxon>
        <taxon>Poaceae</taxon>
        <taxon>BOP clade</taxon>
        <taxon>Pooideae</taxon>
        <taxon>Poodae</taxon>
        <taxon>Poeae</taxon>
        <taxon>Poeae Chloroplast Group 2 (Poeae type)</taxon>
        <taxon>Poodinae</taxon>
        <taxon>Phleinae</taxon>
        <taxon>Phleum</taxon>
    </lineage>
</organism>
<evidence type="ECO:0000256" key="1">
    <source>
        <dbReference type="SAM" id="MobiDB-lite"/>
    </source>
</evidence>
<evidence type="ECO:0000305" key="2"/>
<proteinExistence type="evidence at protein level"/>
<reference key="1">
    <citation type="journal article" date="1994" name="J. Allergy Clin. Immunol.">
        <title>Major allergen Phl p Va (timothy grass) bears at least two different IgE-reactive epitopes.</title>
        <authorList>
            <person name="Bufe A."/>
            <person name="Becker W.M."/>
            <person name="Schramm G."/>
            <person name="Petersen A."/>
            <person name="Mamat U."/>
            <person name="Schlaak M."/>
        </authorList>
    </citation>
    <scope>NUCLEOTIDE SEQUENCE [MRNA]</scope>
    <source>
        <strain>Agrostideae</strain>
    </source>
</reference>
<reference key="2">
    <citation type="submission" date="1997-09" db="EMBL/GenBank/DDBJ databases">
        <authorList>
            <person name="Bufe A."/>
        </authorList>
    </citation>
    <scope>SEQUENCE REVISION</scope>
</reference>